<keyword id="KW-0067">ATP-binding</keyword>
<keyword id="KW-0963">Cytoplasm</keyword>
<keyword id="KW-0329">Glyoxylate bypass</keyword>
<keyword id="KW-0378">Hydrolase</keyword>
<keyword id="KW-0418">Kinase</keyword>
<keyword id="KW-0547">Nucleotide-binding</keyword>
<keyword id="KW-0904">Protein phosphatase</keyword>
<keyword id="KW-0723">Serine/threonine-protein kinase</keyword>
<keyword id="KW-0808">Transferase</keyword>
<keyword id="KW-0816">Tricarboxylic acid cycle</keyword>
<protein>
    <recommendedName>
        <fullName evidence="1">Isocitrate dehydrogenase kinase/phosphatase</fullName>
        <shortName evidence="1">IDH kinase/phosphatase</shortName>
        <shortName evidence="1">IDHK/P</shortName>
        <ecNumber evidence="1">2.7.11.5</ecNumber>
        <ecNumber evidence="1">3.1.3.-</ecNumber>
    </recommendedName>
</protein>
<organism>
    <name type="scientific">Paracidovorax citrulli (strain AAC00-1)</name>
    <name type="common">Acidovorax citrulli</name>
    <dbReference type="NCBI Taxonomy" id="397945"/>
    <lineage>
        <taxon>Bacteria</taxon>
        <taxon>Pseudomonadati</taxon>
        <taxon>Pseudomonadota</taxon>
        <taxon>Betaproteobacteria</taxon>
        <taxon>Burkholderiales</taxon>
        <taxon>Comamonadaceae</taxon>
        <taxon>Paracidovorax</taxon>
    </lineage>
</organism>
<sequence length="602" mass="70101">MFPRRLDSPAAYGIAQAMMDGFDRHYRLFRAESARAKHRFETSDWSGQQRAQRERIEFYDLRVKECVRRLEKEFSAGAQPMDVWHQVKLHYIGLLVGHRQPELAETFFNSVTTKILHRTHFHNDFIFVRPAISTEYLENDEPGARPTYRAYYPTPESLQETLVRVVDNFQLQGEFEDLARDAGRVAEVMRPRLGPAKWRANFQIQVLSSLFYRNKGAYLVGKVINGFQELAFALPILHGTDGRYVIDAALFGEDDLQMLFSFARAYFMVDMEIPSAYVQFLRSLMPRKPRAELYNALGLAKQGKTLFYRDFLHHLRYSSDRFRIAPGIKGMVMLVFDLPSFPFVFKVIKDYYPPQKDTTREQIKGKYLLVKQHDRVGRMADTLEYSEVAFPRERFEDDLIAEIEKFAPSQLEISDRDGDGNVEVILKHVYIERRMIPLNIYLQEAFDAGPHDARARQQMERSVVEYGNAIKDLVAANIFPGDMLWKNFGVTRNGKVVFYDYDEIEYLTDCHFRRVPAPRNEEDELSGEVWWAVGPRDVFPETFGPFLLGNDAVREVFMRHHADLLDPVFWQSHKERIQAGHMYDVFPYDPERRFGAGTGSPA</sequence>
<dbReference type="EC" id="2.7.11.5" evidence="1"/>
<dbReference type="EC" id="3.1.3.-" evidence="1"/>
<dbReference type="EMBL" id="CP000512">
    <property type="protein sequence ID" value="ABM34909.1"/>
    <property type="molecule type" value="Genomic_DNA"/>
</dbReference>
<dbReference type="RefSeq" id="WP_011797380.1">
    <property type="nucleotide sequence ID" value="NC_008752.1"/>
</dbReference>
<dbReference type="SMR" id="A1TVC1"/>
<dbReference type="STRING" id="397945.Aave_4369"/>
<dbReference type="GeneID" id="79789342"/>
<dbReference type="KEGG" id="aav:Aave_4369"/>
<dbReference type="eggNOG" id="COG4579">
    <property type="taxonomic scope" value="Bacteria"/>
</dbReference>
<dbReference type="HOGENOM" id="CLU_033804_1_1_4"/>
<dbReference type="OrthoDB" id="5287793at2"/>
<dbReference type="Proteomes" id="UP000002596">
    <property type="component" value="Chromosome"/>
</dbReference>
<dbReference type="GO" id="GO:0005737">
    <property type="term" value="C:cytoplasm"/>
    <property type="evidence" value="ECO:0007669"/>
    <property type="project" value="UniProtKB-SubCell"/>
</dbReference>
<dbReference type="GO" id="GO:0008772">
    <property type="term" value="F:[isocitrate dehydrogenase (NADP+)] kinase activity"/>
    <property type="evidence" value="ECO:0007669"/>
    <property type="project" value="UniProtKB-UniRule"/>
</dbReference>
<dbReference type="GO" id="GO:0005524">
    <property type="term" value="F:ATP binding"/>
    <property type="evidence" value="ECO:0007669"/>
    <property type="project" value="UniProtKB-UniRule"/>
</dbReference>
<dbReference type="GO" id="GO:0004721">
    <property type="term" value="F:phosphoprotein phosphatase activity"/>
    <property type="evidence" value="ECO:0007669"/>
    <property type="project" value="UniProtKB-KW"/>
</dbReference>
<dbReference type="GO" id="GO:0004674">
    <property type="term" value="F:protein serine/threonine kinase activity"/>
    <property type="evidence" value="ECO:0007669"/>
    <property type="project" value="UniProtKB-KW"/>
</dbReference>
<dbReference type="GO" id="GO:0006006">
    <property type="term" value="P:glucose metabolic process"/>
    <property type="evidence" value="ECO:0007669"/>
    <property type="project" value="InterPro"/>
</dbReference>
<dbReference type="GO" id="GO:0006097">
    <property type="term" value="P:glyoxylate cycle"/>
    <property type="evidence" value="ECO:0007669"/>
    <property type="project" value="UniProtKB-UniRule"/>
</dbReference>
<dbReference type="GO" id="GO:0006099">
    <property type="term" value="P:tricarboxylic acid cycle"/>
    <property type="evidence" value="ECO:0007669"/>
    <property type="project" value="UniProtKB-UniRule"/>
</dbReference>
<dbReference type="HAMAP" id="MF_00747">
    <property type="entry name" value="AceK"/>
    <property type="match status" value="1"/>
</dbReference>
<dbReference type="InterPro" id="IPR046855">
    <property type="entry name" value="AceK_kinase"/>
</dbReference>
<dbReference type="InterPro" id="IPR046854">
    <property type="entry name" value="AceK_regulatory"/>
</dbReference>
<dbReference type="InterPro" id="IPR010452">
    <property type="entry name" value="Isocitrate_DH_AceK"/>
</dbReference>
<dbReference type="NCBIfam" id="NF002804">
    <property type="entry name" value="PRK02946.1"/>
    <property type="match status" value="1"/>
</dbReference>
<dbReference type="PANTHER" id="PTHR39559">
    <property type="match status" value="1"/>
</dbReference>
<dbReference type="PANTHER" id="PTHR39559:SF1">
    <property type="entry name" value="ISOCITRATE DEHYDROGENASE KINASE_PHOSPHATASE"/>
    <property type="match status" value="1"/>
</dbReference>
<dbReference type="Pfam" id="PF06315">
    <property type="entry name" value="AceK_kinase"/>
    <property type="match status" value="1"/>
</dbReference>
<dbReference type="Pfam" id="PF20423">
    <property type="entry name" value="AceK_regulatory"/>
    <property type="match status" value="1"/>
</dbReference>
<dbReference type="PIRSF" id="PIRSF000719">
    <property type="entry name" value="AceK"/>
    <property type="match status" value="1"/>
</dbReference>
<comment type="function">
    <text evidence="1">Bifunctional enzyme which can phosphorylate or dephosphorylate isocitrate dehydrogenase (IDH) on a specific serine residue. This is a regulatory mechanism which enables bacteria to bypass the Krebs cycle via the glyoxylate shunt in response to the source of carbon. When bacteria are grown on glucose, IDH is fully active and unphosphorylated, but when grown on acetate or ethanol, the activity of IDH declines drastically concomitant with its phosphorylation.</text>
</comment>
<comment type="catalytic activity">
    <reaction evidence="1">
        <text>L-seryl-[isocitrate dehydrogenase] + ATP = O-phospho-L-seryl-[isocitrate dehydrogenase] + ADP + H(+)</text>
        <dbReference type="Rhea" id="RHEA:43540"/>
        <dbReference type="Rhea" id="RHEA-COMP:10605"/>
        <dbReference type="Rhea" id="RHEA-COMP:10606"/>
        <dbReference type="ChEBI" id="CHEBI:15378"/>
        <dbReference type="ChEBI" id="CHEBI:29999"/>
        <dbReference type="ChEBI" id="CHEBI:30616"/>
        <dbReference type="ChEBI" id="CHEBI:83421"/>
        <dbReference type="ChEBI" id="CHEBI:456216"/>
        <dbReference type="EC" id="2.7.11.5"/>
    </reaction>
</comment>
<comment type="subcellular location">
    <subcellularLocation>
        <location evidence="1">Cytoplasm</location>
    </subcellularLocation>
</comment>
<comment type="similarity">
    <text evidence="1">Belongs to the AceK family.</text>
</comment>
<gene>
    <name evidence="1" type="primary">aceK</name>
    <name type="ordered locus">Aave_4369</name>
</gene>
<feature type="chain" id="PRO_0000288277" description="Isocitrate dehydrogenase kinase/phosphatase">
    <location>
        <begin position="1"/>
        <end position="602"/>
    </location>
</feature>
<feature type="active site" evidence="1">
    <location>
        <position position="381"/>
    </location>
</feature>
<feature type="binding site" evidence="1">
    <location>
        <begin position="325"/>
        <end position="331"/>
    </location>
    <ligand>
        <name>ATP</name>
        <dbReference type="ChEBI" id="CHEBI:30616"/>
    </ligand>
</feature>
<feature type="binding site" evidence="1">
    <location>
        <position position="346"/>
    </location>
    <ligand>
        <name>ATP</name>
        <dbReference type="ChEBI" id="CHEBI:30616"/>
    </ligand>
</feature>
<name>ACEK_PARC0</name>
<evidence type="ECO:0000255" key="1">
    <source>
        <dbReference type="HAMAP-Rule" id="MF_00747"/>
    </source>
</evidence>
<reference key="1">
    <citation type="submission" date="2006-12" db="EMBL/GenBank/DDBJ databases">
        <title>Complete sequence of Acidovorax avenae subsp. citrulli AAC00-1.</title>
        <authorList>
            <person name="Copeland A."/>
            <person name="Lucas S."/>
            <person name="Lapidus A."/>
            <person name="Barry K."/>
            <person name="Detter J.C."/>
            <person name="Glavina del Rio T."/>
            <person name="Dalin E."/>
            <person name="Tice H."/>
            <person name="Pitluck S."/>
            <person name="Kiss H."/>
            <person name="Brettin T."/>
            <person name="Bruce D."/>
            <person name="Han C."/>
            <person name="Tapia R."/>
            <person name="Gilna P."/>
            <person name="Schmutz J."/>
            <person name="Larimer F."/>
            <person name="Land M."/>
            <person name="Hauser L."/>
            <person name="Kyrpides N."/>
            <person name="Kim E."/>
            <person name="Stahl D."/>
            <person name="Richardson P."/>
        </authorList>
    </citation>
    <scope>NUCLEOTIDE SEQUENCE [LARGE SCALE GENOMIC DNA]</scope>
    <source>
        <strain>AAC00-1</strain>
    </source>
</reference>
<accession>A1TVC1</accession>
<proteinExistence type="inferred from homology"/>